<keyword id="KW-0066">ATP synthesis</keyword>
<keyword id="KW-1003">Cell membrane</keyword>
<keyword id="KW-0138">CF(0)</keyword>
<keyword id="KW-0139">CF(1)</keyword>
<keyword id="KW-0375">Hydrogen ion transport</keyword>
<keyword id="KW-0406">Ion transport</keyword>
<keyword id="KW-0472">Membrane</keyword>
<keyword id="KW-0511">Multifunctional enzyme</keyword>
<keyword id="KW-1185">Reference proteome</keyword>
<keyword id="KW-0812">Transmembrane</keyword>
<keyword id="KW-1133">Transmembrane helix</keyword>
<keyword id="KW-0813">Transport</keyword>
<feature type="chain" id="PRO_0000368886" description="ATP synthase subunit b-delta">
    <location>
        <begin position="1"/>
        <end position="448"/>
    </location>
</feature>
<feature type="transmembrane region" description="Helical" evidence="2">
    <location>
        <begin position="4"/>
        <end position="24"/>
    </location>
</feature>
<feature type="region of interest" description="ATP synthase subunit b">
    <location>
        <begin position="1"/>
        <end position="168"/>
    </location>
</feature>
<feature type="region of interest" description="ATP synthase subunit delta">
    <location>
        <begin position="169"/>
        <end position="448"/>
    </location>
</feature>
<proteinExistence type="inferred from homology"/>
<evidence type="ECO:0000250" key="1"/>
<evidence type="ECO:0000255" key="2"/>
<evidence type="ECO:0000305" key="3"/>
<reference key="1">
    <citation type="journal article" date="2009" name="PLoS ONE">
        <title>Non mycobacterial virulence genes in the genome of the emerging pathogen Mycobacterium abscessus.</title>
        <authorList>
            <person name="Ripoll F."/>
            <person name="Pasek S."/>
            <person name="Schenowitz C."/>
            <person name="Dossat C."/>
            <person name="Barbe V."/>
            <person name="Rottman M."/>
            <person name="Macheras E."/>
            <person name="Heym B."/>
            <person name="Herrmann J.L."/>
            <person name="Daffe M."/>
            <person name="Brosch R."/>
            <person name="Risler J.L."/>
            <person name="Gaillard J.L."/>
        </authorList>
    </citation>
    <scope>NUCLEOTIDE SEQUENCE [LARGE SCALE GENOMIC DNA]</scope>
    <source>
        <strain>ATCC 19977 / DSM 44196 / CCUG 20993 / CIP 104536 / JCM 13569 / NCTC 13031 / TMC 1543 / L948</strain>
    </source>
</reference>
<dbReference type="EMBL" id="CU458896">
    <property type="protein sequence ID" value="CAM61536.1"/>
    <property type="molecule type" value="Genomic_DNA"/>
</dbReference>
<dbReference type="RefSeq" id="WP_005110133.1">
    <property type="nucleotide sequence ID" value="NZ_MLCG01000002.1"/>
</dbReference>
<dbReference type="SMR" id="B1MLV9"/>
<dbReference type="GeneID" id="93378395"/>
<dbReference type="KEGG" id="mab:MAB_1450"/>
<dbReference type="Proteomes" id="UP000007137">
    <property type="component" value="Chromosome"/>
</dbReference>
<dbReference type="GO" id="GO:0005886">
    <property type="term" value="C:plasma membrane"/>
    <property type="evidence" value="ECO:0007669"/>
    <property type="project" value="UniProtKB-SubCell"/>
</dbReference>
<dbReference type="GO" id="GO:0045259">
    <property type="term" value="C:proton-transporting ATP synthase complex"/>
    <property type="evidence" value="ECO:0007669"/>
    <property type="project" value="UniProtKB-KW"/>
</dbReference>
<dbReference type="GO" id="GO:0046933">
    <property type="term" value="F:proton-transporting ATP synthase activity, rotational mechanism"/>
    <property type="evidence" value="ECO:0007669"/>
    <property type="project" value="UniProtKB-UniRule"/>
</dbReference>
<dbReference type="CDD" id="cd06503">
    <property type="entry name" value="ATP-synt_Fo_b"/>
    <property type="match status" value="1"/>
</dbReference>
<dbReference type="Gene3D" id="1.20.5.620">
    <property type="entry name" value="F1F0 ATP synthase subunit B, membrane domain"/>
    <property type="match status" value="1"/>
</dbReference>
<dbReference type="Gene3D" id="1.10.520.20">
    <property type="entry name" value="N-terminal domain of the delta subunit of the F1F0-ATP synthase"/>
    <property type="match status" value="1"/>
</dbReference>
<dbReference type="HAMAP" id="MF_01398">
    <property type="entry name" value="ATP_synth_b_bprime"/>
    <property type="match status" value="1"/>
</dbReference>
<dbReference type="HAMAP" id="MF_01416">
    <property type="entry name" value="ATP_synth_delta_bact"/>
    <property type="match status" value="1"/>
</dbReference>
<dbReference type="InterPro" id="IPR028987">
    <property type="entry name" value="ATP_synth_B-like_membr_sf"/>
</dbReference>
<dbReference type="InterPro" id="IPR002146">
    <property type="entry name" value="ATP_synth_b/b'su_bac/chlpt"/>
</dbReference>
<dbReference type="InterPro" id="IPR005864">
    <property type="entry name" value="ATP_synth_F0_bsu_bac"/>
</dbReference>
<dbReference type="InterPro" id="IPR026015">
    <property type="entry name" value="ATP_synth_OSCP/delta_N_sf"/>
</dbReference>
<dbReference type="InterPro" id="IPR020781">
    <property type="entry name" value="ATPase_OSCP/d_CS"/>
</dbReference>
<dbReference type="InterPro" id="IPR000711">
    <property type="entry name" value="ATPase_OSCP/dsu"/>
</dbReference>
<dbReference type="NCBIfam" id="TIGR01144">
    <property type="entry name" value="ATP_synt_b"/>
    <property type="match status" value="1"/>
</dbReference>
<dbReference type="NCBIfam" id="TIGR01145">
    <property type="entry name" value="ATP_synt_delta"/>
    <property type="match status" value="1"/>
</dbReference>
<dbReference type="NCBIfam" id="NF009961">
    <property type="entry name" value="PRK13428.1"/>
    <property type="match status" value="1"/>
</dbReference>
<dbReference type="NCBIfam" id="NF009967">
    <property type="entry name" value="PRK13430.1"/>
    <property type="match status" value="1"/>
</dbReference>
<dbReference type="PANTHER" id="PTHR11910">
    <property type="entry name" value="ATP SYNTHASE DELTA CHAIN"/>
    <property type="match status" value="1"/>
</dbReference>
<dbReference type="Pfam" id="PF00430">
    <property type="entry name" value="ATP-synt_B"/>
    <property type="match status" value="1"/>
</dbReference>
<dbReference type="Pfam" id="PF00213">
    <property type="entry name" value="OSCP"/>
    <property type="match status" value="1"/>
</dbReference>
<dbReference type="PRINTS" id="PR00125">
    <property type="entry name" value="ATPASEDELTA"/>
</dbReference>
<dbReference type="SUPFAM" id="SSF81573">
    <property type="entry name" value="F1F0 ATP synthase subunit B, membrane domain"/>
    <property type="match status" value="1"/>
</dbReference>
<dbReference type="SUPFAM" id="SSF47928">
    <property type="entry name" value="N-terminal domain of the delta subunit of the F1F0-ATP synthase"/>
    <property type="match status" value="1"/>
</dbReference>
<dbReference type="PROSITE" id="PS00389">
    <property type="entry name" value="ATPASE_DELTA"/>
    <property type="match status" value="1"/>
</dbReference>
<gene>
    <name type="primary">atpFH</name>
    <name type="synonym">atpF</name>
    <name type="synonym">atpH</name>
    <name type="ordered locus">MAB_1450</name>
</gene>
<accession>B1MLV9</accession>
<name>ATPFD_MYCA9</name>
<comment type="function">
    <text evidence="1">F(1)F(0) ATP synthase produces ATP from ADP in the presence of a proton or sodium gradient. F-type ATPases consist of two structural domains, F(1) containing the extramembraneous catalytic core and F(0) containing the membrane proton channel, linked together by a central stalk and a peripheral stalk. During catalysis, ATP synthesis in the catalytic domain of F(1) is coupled via a rotary mechanism of the central stalk subunits to proton translocation (By similarity).</text>
</comment>
<comment type="function">
    <text evidence="1">This fusion protein includes a component of the F(0) channel (subunit b) and of the F(1) subunit (subunit delta). Two copies of subunit b and one of delta together form the peripheral 'stator' stalk which links F(1) to F(0) (By similarity).</text>
</comment>
<comment type="subunit">
    <text evidence="1">F-type ATPases have 2 components, F(1) - the catalytic core - and F(0) - the membrane proton channel. F(1) has five subunits: alpha(3), beta(3), gamma(1), delta(1), epsilon(1). F(0) has three main subunits: a(1), b(2) and c(10-14). The alpha and beta chains form an alternating ring which encloses part of the gamma chain. F(1) is attached to F(0) by a central stalk formed by the gamma and epsilon chains, while a peripheral stalk is formed by the delta and b chains (By similarity).</text>
</comment>
<comment type="subcellular location">
    <subcellularLocation>
        <location evidence="1">Cell membrane</location>
        <topology evidence="1">Single-pass membrane protein</topology>
    </subcellularLocation>
</comment>
<comment type="similarity">
    <text evidence="3">In the N-terminal section; belongs to the ATPase B chain family.</text>
</comment>
<comment type="similarity">
    <text evidence="3">In the C-terminal section; belongs to the ATPase delta chain family.</text>
</comment>
<organism>
    <name type="scientific">Mycobacteroides abscessus (strain ATCC 19977 / DSM 44196 / CCUG 20993 / CIP 104536 / JCM 13569 / NCTC 13031 / TMC 1543 / L948)</name>
    <name type="common">Mycobacterium abscessus</name>
    <dbReference type="NCBI Taxonomy" id="561007"/>
    <lineage>
        <taxon>Bacteria</taxon>
        <taxon>Bacillati</taxon>
        <taxon>Actinomycetota</taxon>
        <taxon>Actinomycetes</taxon>
        <taxon>Mycobacteriales</taxon>
        <taxon>Mycobacteriaceae</taxon>
        <taxon>Mycobacteroides</taxon>
        <taxon>Mycobacteroides abscessus</taxon>
    </lineage>
</organism>
<protein>
    <recommendedName>
        <fullName>ATP synthase subunit b-delta</fullName>
    </recommendedName>
    <domain>
        <recommendedName>
            <fullName>ATP synthase subunit b</fullName>
        </recommendedName>
        <alternativeName>
            <fullName>ATP synthase F(0) sector subunit b 2</fullName>
        </alternativeName>
        <alternativeName>
            <fullName>ATPase subunit I 2</fullName>
        </alternativeName>
        <alternativeName>
            <fullName>F-type ATPase subunit b 2</fullName>
            <shortName>F-ATPase subunit b 2</shortName>
        </alternativeName>
    </domain>
    <domain>
        <recommendedName>
            <fullName>ATP synthase subunit delta</fullName>
        </recommendedName>
        <alternativeName>
            <fullName>ATP synthase F(1) sector subunit delta</fullName>
        </alternativeName>
        <alternativeName>
            <fullName>F-type ATPase subunit delta</fullName>
            <shortName>F-ATPase subunit delta</shortName>
        </alternativeName>
    </domain>
</protein>
<sequence>MSTFIGQLIGFAVIVFLVVKYVVPPVRTLMAKQQDAVRQQLADSKTAADKLVEAEGAHAKAIEDAKADAAQIAEEAKADAVQISKQLREQADAEVERIKVHGQEQIVLQRQQLIRQLRGDLGAESVRRAGDLVRSHVADPSAQSATVDRFLDELSQMAGSVGAAKRPVPGGYSGMHAASRESLAAQVSTFRETAASLDSSALSALAEDIAAVAELLISELVLRKHLSEPVDASENEAKLTLVNSLLGNKIGAPALAIVRSAVTARWSASSDLITSLEYIARLALLERAERDGQIEDVEDQLFRVSRVLDAEPQLATLLSDSTAPAQGRVALLTNVLGGRANEVTTALLAQTVRLLYSVRAEVAVLDVAELAVARRDESVAHVKAAAPITDAQRTRLAQVLGQIYGRTIAVQLDVDPELLGGLVVNIGDEEIDGSLSTRLSAAALHLPN</sequence>